<proteinExistence type="inferred from homology"/>
<gene>
    <name evidence="1" type="primary">rppH</name>
    <name evidence="1" type="synonym">nudH</name>
    <name type="ordered locus">SSPA2674</name>
</gene>
<comment type="function">
    <text evidence="1">Accelerates the degradation of transcripts by removing pyrophosphate from the 5'-end of triphosphorylated RNA, leading to a more labile monophosphorylated state that can stimulate subsequent ribonuclease cleavage.</text>
</comment>
<comment type="cofactor">
    <cofactor evidence="1">
        <name>a divalent metal cation</name>
        <dbReference type="ChEBI" id="CHEBI:60240"/>
    </cofactor>
</comment>
<comment type="similarity">
    <text evidence="1">Belongs to the Nudix hydrolase family. RppH subfamily.</text>
</comment>
<keyword id="KW-0378">Hydrolase</keyword>
<protein>
    <recommendedName>
        <fullName evidence="1">RNA pyrophosphohydrolase</fullName>
        <ecNumber evidence="1">3.6.1.-</ecNumber>
    </recommendedName>
    <alternativeName>
        <fullName evidence="1">(Di)nucleoside polyphosphate hydrolase</fullName>
    </alternativeName>
</protein>
<organism>
    <name type="scientific">Salmonella paratyphi A (strain AKU_12601)</name>
    <dbReference type="NCBI Taxonomy" id="554290"/>
    <lineage>
        <taxon>Bacteria</taxon>
        <taxon>Pseudomonadati</taxon>
        <taxon>Pseudomonadota</taxon>
        <taxon>Gammaproteobacteria</taxon>
        <taxon>Enterobacterales</taxon>
        <taxon>Enterobacteriaceae</taxon>
        <taxon>Salmonella</taxon>
    </lineage>
</organism>
<accession>B5BFH0</accession>
<sequence length="176" mass="20806">MIDDDGYRPNVGIVICNRQGQVMWARRFGQHSWQFPQGGINPGESAEQAMYRELFEEVGLSRKDVRILASTRNWLRYKLPKRLVRWDTKPVCIGQKQKWFLLQLMSADAEINMQTSSTPEFDGWRWVSYWYPVRQVVSFKRDVYRRVMKEFASVVMALQDNPPKLQSAPAYRRKRG</sequence>
<feature type="chain" id="PRO_1000115297" description="RNA pyrophosphohydrolase">
    <location>
        <begin position="1"/>
        <end position="176"/>
    </location>
</feature>
<feature type="domain" description="Nudix hydrolase" evidence="1">
    <location>
        <begin position="6"/>
        <end position="149"/>
    </location>
</feature>
<feature type="short sequence motif" description="Nudix box">
    <location>
        <begin position="38"/>
        <end position="59"/>
    </location>
</feature>
<dbReference type="EC" id="3.6.1.-" evidence="1"/>
<dbReference type="EMBL" id="FM200053">
    <property type="protein sequence ID" value="CAR60915.1"/>
    <property type="molecule type" value="Genomic_DNA"/>
</dbReference>
<dbReference type="RefSeq" id="WP_000564481.1">
    <property type="nucleotide sequence ID" value="NC_011147.1"/>
</dbReference>
<dbReference type="SMR" id="B5BFH0"/>
<dbReference type="KEGG" id="sek:SSPA2674"/>
<dbReference type="HOGENOM" id="CLU_087195_3_2_6"/>
<dbReference type="Proteomes" id="UP000001869">
    <property type="component" value="Chromosome"/>
</dbReference>
<dbReference type="GO" id="GO:0005737">
    <property type="term" value="C:cytoplasm"/>
    <property type="evidence" value="ECO:0007669"/>
    <property type="project" value="TreeGrafter"/>
</dbReference>
<dbReference type="GO" id="GO:0034353">
    <property type="term" value="F:mRNA 5'-diphosphatase activity"/>
    <property type="evidence" value="ECO:0007669"/>
    <property type="project" value="TreeGrafter"/>
</dbReference>
<dbReference type="GO" id="GO:0006402">
    <property type="term" value="P:mRNA catabolic process"/>
    <property type="evidence" value="ECO:0007669"/>
    <property type="project" value="TreeGrafter"/>
</dbReference>
<dbReference type="CDD" id="cd03671">
    <property type="entry name" value="NUDIX_Ap4A_hydrolase_plant_like"/>
    <property type="match status" value="1"/>
</dbReference>
<dbReference type="FunFam" id="3.90.79.10:FF:000001">
    <property type="entry name" value="RNA pyrophosphohydrolase"/>
    <property type="match status" value="1"/>
</dbReference>
<dbReference type="Gene3D" id="3.90.79.10">
    <property type="entry name" value="Nucleoside Triphosphate Pyrophosphohydrolase"/>
    <property type="match status" value="1"/>
</dbReference>
<dbReference type="HAMAP" id="MF_00298">
    <property type="entry name" value="Nudix_RppH"/>
    <property type="match status" value="1"/>
</dbReference>
<dbReference type="InterPro" id="IPR020476">
    <property type="entry name" value="Nudix_hydrolase"/>
</dbReference>
<dbReference type="InterPro" id="IPR015797">
    <property type="entry name" value="NUDIX_hydrolase-like_dom_sf"/>
</dbReference>
<dbReference type="InterPro" id="IPR020084">
    <property type="entry name" value="NUDIX_hydrolase_CS"/>
</dbReference>
<dbReference type="InterPro" id="IPR000086">
    <property type="entry name" value="NUDIX_hydrolase_dom"/>
</dbReference>
<dbReference type="InterPro" id="IPR022927">
    <property type="entry name" value="RppH"/>
</dbReference>
<dbReference type="NCBIfam" id="NF001934">
    <property type="entry name" value="PRK00714.1-1"/>
    <property type="match status" value="1"/>
</dbReference>
<dbReference type="NCBIfam" id="NF001937">
    <property type="entry name" value="PRK00714.1-4"/>
    <property type="match status" value="1"/>
</dbReference>
<dbReference type="NCBIfam" id="NF001938">
    <property type="entry name" value="PRK00714.1-5"/>
    <property type="match status" value="1"/>
</dbReference>
<dbReference type="PANTHER" id="PTHR23114">
    <property type="entry name" value="M7GPPPN-MRNA HYDROLASE"/>
    <property type="match status" value="1"/>
</dbReference>
<dbReference type="PANTHER" id="PTHR23114:SF17">
    <property type="entry name" value="M7GPPPN-MRNA HYDROLASE"/>
    <property type="match status" value="1"/>
</dbReference>
<dbReference type="Pfam" id="PF00293">
    <property type="entry name" value="NUDIX"/>
    <property type="match status" value="1"/>
</dbReference>
<dbReference type="PRINTS" id="PR00502">
    <property type="entry name" value="NUDIXFAMILY"/>
</dbReference>
<dbReference type="SUPFAM" id="SSF55811">
    <property type="entry name" value="Nudix"/>
    <property type="match status" value="1"/>
</dbReference>
<dbReference type="PROSITE" id="PS51462">
    <property type="entry name" value="NUDIX"/>
    <property type="match status" value="1"/>
</dbReference>
<dbReference type="PROSITE" id="PS00893">
    <property type="entry name" value="NUDIX_BOX"/>
    <property type="match status" value="1"/>
</dbReference>
<name>RPPH_SALPK</name>
<evidence type="ECO:0000255" key="1">
    <source>
        <dbReference type="HAMAP-Rule" id="MF_00298"/>
    </source>
</evidence>
<reference key="1">
    <citation type="journal article" date="2009" name="BMC Genomics">
        <title>Pseudogene accumulation in the evolutionary histories of Salmonella enterica serovars Paratyphi A and Typhi.</title>
        <authorList>
            <person name="Holt K.E."/>
            <person name="Thomson N.R."/>
            <person name="Wain J."/>
            <person name="Langridge G.C."/>
            <person name="Hasan R."/>
            <person name="Bhutta Z.A."/>
            <person name="Quail M.A."/>
            <person name="Norbertczak H."/>
            <person name="Walker D."/>
            <person name="Simmonds M."/>
            <person name="White B."/>
            <person name="Bason N."/>
            <person name="Mungall K."/>
            <person name="Dougan G."/>
            <person name="Parkhill J."/>
        </authorList>
    </citation>
    <scope>NUCLEOTIDE SEQUENCE [LARGE SCALE GENOMIC DNA]</scope>
    <source>
        <strain>AKU_12601</strain>
    </source>
</reference>